<feature type="signal peptide" evidence="2">
    <location>
        <begin position="1"/>
        <end position="19"/>
    </location>
</feature>
<feature type="chain" id="PRO_0000018809" description="Beta-2-microglobulin">
    <location>
        <begin position="20"/>
        <end position="116"/>
    </location>
</feature>
<feature type="domain" description="Ig-like C1-type">
    <location>
        <begin position="24"/>
        <end position="111"/>
    </location>
</feature>
<feature type="disulfide bond" evidence="3">
    <location>
        <begin position="44"/>
        <end position="99"/>
    </location>
</feature>
<sequence length="116" mass="13187">MKFLLSFVVLAVFSASAFAKESPPKIQVYSRNPGEFGKENTLICHVSDFHPPDITIDLLKNGEVIPNAEQTDLAFEKGWKFHLTKSVSFTPTSNDKFTCRVRHLKETKNISWEPDM</sequence>
<name>B2MG_ICTPU</name>
<accession>O42197</accession>
<comment type="function">
    <text evidence="1">Component of the class I major histocompatibility complex (MHC). Involved in the presentation of peptide antigens to the immune system (By similarity).</text>
</comment>
<comment type="subunit">
    <text evidence="1">Heterodimer of an alpha chain and a beta chain. Beta-2-microglobulin is the beta-chain of major histocompatibility complex class I molecules (By similarity).</text>
</comment>
<comment type="subcellular location">
    <subcellularLocation>
        <location evidence="1">Secreted</location>
    </subcellularLocation>
</comment>
<comment type="similarity">
    <text evidence="4">Belongs to the beta-2-microglobulin family.</text>
</comment>
<reference key="1">
    <citation type="journal article" date="1998" name="Immunogenetics">
        <title>Beta 2-microglobulin of ictalurid catfishes.</title>
        <authorList>
            <person name="Criscitiello M.F."/>
            <person name="Benedetto R."/>
            <person name="Antao A."/>
            <person name="Wilson M.R."/>
            <person name="Chinchar V.G."/>
            <person name="Miller N.W."/>
            <person name="Clem L.W."/>
            <person name="McConnell T.J."/>
        </authorList>
    </citation>
    <scope>NUCLEOTIDE SEQUENCE [GENOMIC DNA / MRNA]</scope>
</reference>
<protein>
    <recommendedName>
        <fullName>Beta-2-microglobulin</fullName>
    </recommendedName>
</protein>
<keyword id="KW-1015">Disulfide bond</keyword>
<keyword id="KW-0391">Immunity</keyword>
<keyword id="KW-0393">Immunoglobulin domain</keyword>
<keyword id="KW-0490">MHC I</keyword>
<keyword id="KW-0964">Secreted</keyword>
<keyword id="KW-0732">Signal</keyword>
<proteinExistence type="inferred from homology"/>
<organism>
    <name type="scientific">Ictalurus punctatus</name>
    <name type="common">Channel catfish</name>
    <name type="synonym">Silurus punctatus</name>
    <dbReference type="NCBI Taxonomy" id="7998"/>
    <lineage>
        <taxon>Eukaryota</taxon>
        <taxon>Metazoa</taxon>
        <taxon>Chordata</taxon>
        <taxon>Craniata</taxon>
        <taxon>Vertebrata</taxon>
        <taxon>Euteleostomi</taxon>
        <taxon>Actinopterygii</taxon>
        <taxon>Neopterygii</taxon>
        <taxon>Teleostei</taxon>
        <taxon>Ostariophysi</taxon>
        <taxon>Siluriformes</taxon>
        <taxon>Ictaluridae</taxon>
        <taxon>Ictalurus</taxon>
    </lineage>
</organism>
<gene>
    <name type="primary">b2m</name>
</gene>
<evidence type="ECO:0000250" key="1"/>
<evidence type="ECO:0000255" key="2"/>
<evidence type="ECO:0000255" key="3">
    <source>
        <dbReference type="PROSITE-ProRule" id="PRU00114"/>
    </source>
</evidence>
<evidence type="ECO:0000305" key="4"/>
<dbReference type="EMBL" id="AF016041">
    <property type="protein sequence ID" value="AAC67230.1"/>
    <property type="molecule type" value="mRNA"/>
</dbReference>
<dbReference type="EMBL" id="AF016042">
    <property type="protein sequence ID" value="AAC64991.1"/>
    <property type="molecule type" value="Genomic_DNA"/>
</dbReference>
<dbReference type="RefSeq" id="NP_001187001.1">
    <property type="nucleotide sequence ID" value="NM_001200072.1"/>
</dbReference>
<dbReference type="SMR" id="O42197"/>
<dbReference type="STRING" id="7998.ENSIPUP00000010741"/>
<dbReference type="GeneID" id="100304470"/>
<dbReference type="KEGG" id="ipu:100304470"/>
<dbReference type="CTD" id="791742"/>
<dbReference type="OrthoDB" id="9949628at2759"/>
<dbReference type="Proteomes" id="UP000221080">
    <property type="component" value="Chromosome 5"/>
</dbReference>
<dbReference type="GO" id="GO:0005576">
    <property type="term" value="C:extracellular region"/>
    <property type="evidence" value="ECO:0007669"/>
    <property type="project" value="UniProtKB-SubCell"/>
</dbReference>
<dbReference type="GO" id="GO:0042612">
    <property type="term" value="C:MHC class I protein complex"/>
    <property type="evidence" value="ECO:0007669"/>
    <property type="project" value="UniProtKB-KW"/>
</dbReference>
<dbReference type="GO" id="GO:0002474">
    <property type="term" value="P:antigen processing and presentation of peptide antigen via MHC class I"/>
    <property type="evidence" value="ECO:0007669"/>
    <property type="project" value="UniProtKB-KW"/>
</dbReference>
<dbReference type="FunFam" id="2.60.40.10:FF:001005">
    <property type="entry name" value="Beta-2-microglobulin"/>
    <property type="match status" value="1"/>
</dbReference>
<dbReference type="Gene3D" id="2.60.40.10">
    <property type="entry name" value="Immunoglobulins"/>
    <property type="match status" value="1"/>
</dbReference>
<dbReference type="InterPro" id="IPR007110">
    <property type="entry name" value="Ig-like_dom"/>
</dbReference>
<dbReference type="InterPro" id="IPR036179">
    <property type="entry name" value="Ig-like_dom_sf"/>
</dbReference>
<dbReference type="InterPro" id="IPR013783">
    <property type="entry name" value="Ig-like_fold"/>
</dbReference>
<dbReference type="InterPro" id="IPR003006">
    <property type="entry name" value="Ig/MHC_CS"/>
</dbReference>
<dbReference type="InterPro" id="IPR003597">
    <property type="entry name" value="Ig_C1-set"/>
</dbReference>
<dbReference type="InterPro" id="IPR050160">
    <property type="entry name" value="MHC/Immunoglobulin"/>
</dbReference>
<dbReference type="PANTHER" id="PTHR19944:SF62">
    <property type="entry name" value="BETA-2-MICROGLOBULIN"/>
    <property type="match status" value="1"/>
</dbReference>
<dbReference type="PANTHER" id="PTHR19944">
    <property type="entry name" value="MHC CLASS II-RELATED"/>
    <property type="match status" value="1"/>
</dbReference>
<dbReference type="Pfam" id="PF07654">
    <property type="entry name" value="C1-set"/>
    <property type="match status" value="1"/>
</dbReference>
<dbReference type="SMART" id="SM00407">
    <property type="entry name" value="IGc1"/>
    <property type="match status" value="1"/>
</dbReference>
<dbReference type="SUPFAM" id="SSF48726">
    <property type="entry name" value="Immunoglobulin"/>
    <property type="match status" value="1"/>
</dbReference>
<dbReference type="PROSITE" id="PS50835">
    <property type="entry name" value="IG_LIKE"/>
    <property type="match status" value="1"/>
</dbReference>
<dbReference type="PROSITE" id="PS00290">
    <property type="entry name" value="IG_MHC"/>
    <property type="match status" value="1"/>
</dbReference>